<comment type="function">
    <text evidence="1">Chaperone protein which promotes assembly of the 20S proteasome as part of a heterodimer with psmg1.</text>
</comment>
<comment type="subunit">
    <text evidence="1">Forms a heterodimer with psmg1.</text>
</comment>
<comment type="subcellular location">
    <subcellularLocation>
        <location evidence="3">Nucleus</location>
    </subcellularLocation>
</comment>
<comment type="PTM">
    <text evidence="2">Degraded by the proteasome upon completion of 20S proteasome maturation.</text>
</comment>
<comment type="similarity">
    <text evidence="4">Belongs to the PSMG2 family.</text>
</comment>
<reference key="1">
    <citation type="journal article" date="2013" name="Nature">
        <title>The zebrafish reference genome sequence and its relationship to the human genome.</title>
        <authorList>
            <person name="Howe K."/>
            <person name="Clark M.D."/>
            <person name="Torroja C.F."/>
            <person name="Torrance J."/>
            <person name="Berthelot C."/>
            <person name="Muffato M."/>
            <person name="Collins J.E."/>
            <person name="Humphray S."/>
            <person name="McLaren K."/>
            <person name="Matthews L."/>
            <person name="McLaren S."/>
            <person name="Sealy I."/>
            <person name="Caccamo M."/>
            <person name="Churcher C."/>
            <person name="Scott C."/>
            <person name="Barrett J.C."/>
            <person name="Koch R."/>
            <person name="Rauch G.J."/>
            <person name="White S."/>
            <person name="Chow W."/>
            <person name="Kilian B."/>
            <person name="Quintais L.T."/>
            <person name="Guerra-Assuncao J.A."/>
            <person name="Zhou Y."/>
            <person name="Gu Y."/>
            <person name="Yen J."/>
            <person name="Vogel J.H."/>
            <person name="Eyre T."/>
            <person name="Redmond S."/>
            <person name="Banerjee R."/>
            <person name="Chi J."/>
            <person name="Fu B."/>
            <person name="Langley E."/>
            <person name="Maguire S.F."/>
            <person name="Laird G.K."/>
            <person name="Lloyd D."/>
            <person name="Kenyon E."/>
            <person name="Donaldson S."/>
            <person name="Sehra H."/>
            <person name="Almeida-King J."/>
            <person name="Loveland J."/>
            <person name="Trevanion S."/>
            <person name="Jones M."/>
            <person name="Quail M."/>
            <person name="Willey D."/>
            <person name="Hunt A."/>
            <person name="Burton J."/>
            <person name="Sims S."/>
            <person name="McLay K."/>
            <person name="Plumb B."/>
            <person name="Davis J."/>
            <person name="Clee C."/>
            <person name="Oliver K."/>
            <person name="Clark R."/>
            <person name="Riddle C."/>
            <person name="Elliot D."/>
            <person name="Threadgold G."/>
            <person name="Harden G."/>
            <person name="Ware D."/>
            <person name="Begum S."/>
            <person name="Mortimore B."/>
            <person name="Kerry G."/>
            <person name="Heath P."/>
            <person name="Phillimore B."/>
            <person name="Tracey A."/>
            <person name="Corby N."/>
            <person name="Dunn M."/>
            <person name="Johnson C."/>
            <person name="Wood J."/>
            <person name="Clark S."/>
            <person name="Pelan S."/>
            <person name="Griffiths G."/>
            <person name="Smith M."/>
            <person name="Glithero R."/>
            <person name="Howden P."/>
            <person name="Barker N."/>
            <person name="Lloyd C."/>
            <person name="Stevens C."/>
            <person name="Harley J."/>
            <person name="Holt K."/>
            <person name="Panagiotidis G."/>
            <person name="Lovell J."/>
            <person name="Beasley H."/>
            <person name="Henderson C."/>
            <person name="Gordon D."/>
            <person name="Auger K."/>
            <person name="Wright D."/>
            <person name="Collins J."/>
            <person name="Raisen C."/>
            <person name="Dyer L."/>
            <person name="Leung K."/>
            <person name="Robertson L."/>
            <person name="Ambridge K."/>
            <person name="Leongamornlert D."/>
            <person name="McGuire S."/>
            <person name="Gilderthorp R."/>
            <person name="Griffiths C."/>
            <person name="Manthravadi D."/>
            <person name="Nichol S."/>
            <person name="Barker G."/>
            <person name="Whitehead S."/>
            <person name="Kay M."/>
            <person name="Brown J."/>
            <person name="Murnane C."/>
            <person name="Gray E."/>
            <person name="Humphries M."/>
            <person name="Sycamore N."/>
            <person name="Barker D."/>
            <person name="Saunders D."/>
            <person name="Wallis J."/>
            <person name="Babbage A."/>
            <person name="Hammond S."/>
            <person name="Mashreghi-Mohammadi M."/>
            <person name="Barr L."/>
            <person name="Martin S."/>
            <person name="Wray P."/>
            <person name="Ellington A."/>
            <person name="Matthews N."/>
            <person name="Ellwood M."/>
            <person name="Woodmansey R."/>
            <person name="Clark G."/>
            <person name="Cooper J."/>
            <person name="Tromans A."/>
            <person name="Grafham D."/>
            <person name="Skuce C."/>
            <person name="Pandian R."/>
            <person name="Andrews R."/>
            <person name="Harrison E."/>
            <person name="Kimberley A."/>
            <person name="Garnett J."/>
            <person name="Fosker N."/>
            <person name="Hall R."/>
            <person name="Garner P."/>
            <person name="Kelly D."/>
            <person name="Bird C."/>
            <person name="Palmer S."/>
            <person name="Gehring I."/>
            <person name="Berger A."/>
            <person name="Dooley C.M."/>
            <person name="Ersan-Urun Z."/>
            <person name="Eser C."/>
            <person name="Geiger H."/>
            <person name="Geisler M."/>
            <person name="Karotki L."/>
            <person name="Kirn A."/>
            <person name="Konantz J."/>
            <person name="Konantz M."/>
            <person name="Oberlander M."/>
            <person name="Rudolph-Geiger S."/>
            <person name="Teucke M."/>
            <person name="Lanz C."/>
            <person name="Raddatz G."/>
            <person name="Osoegawa K."/>
            <person name="Zhu B."/>
            <person name="Rapp A."/>
            <person name="Widaa S."/>
            <person name="Langford C."/>
            <person name="Yang F."/>
            <person name="Schuster S.C."/>
            <person name="Carter N.P."/>
            <person name="Harrow J."/>
            <person name="Ning Z."/>
            <person name="Herrero J."/>
            <person name="Searle S.M."/>
            <person name="Enright A."/>
            <person name="Geisler R."/>
            <person name="Plasterk R.H."/>
            <person name="Lee C."/>
            <person name="Westerfield M."/>
            <person name="de Jong P.J."/>
            <person name="Zon L.I."/>
            <person name="Postlethwait J.H."/>
            <person name="Nusslein-Volhard C."/>
            <person name="Hubbard T.J."/>
            <person name="Roest Crollius H."/>
            <person name="Rogers J."/>
            <person name="Stemple D.L."/>
        </authorList>
    </citation>
    <scope>NUCLEOTIDE SEQUENCE [LARGE SCALE GENOMIC DNA]</scope>
    <source>
        <strain>Tuebingen</strain>
    </source>
</reference>
<reference evidence="7" key="2">
    <citation type="submission" date="2003-10" db="EMBL/GenBank/DDBJ databases">
        <authorList>
            <consortium name="NIH - Zebrafish Gene Collection (ZGC) project"/>
        </authorList>
    </citation>
    <scope>NUCLEOTIDE SEQUENCE [LARGE SCALE MRNA]</scope>
    <source>
        <tissue evidence="6">Retina</tissue>
    </source>
</reference>
<protein>
    <recommendedName>
        <fullName>Proteasome assembly chaperone 2</fullName>
    </recommendedName>
    <alternativeName>
        <fullName>Tumor necrosis factor superfamily member 5-induced protein 1 homolog</fullName>
    </alternativeName>
</protein>
<sequence>MFISSGDAVPSFKGFTLILPAVSVGNVGQLAVDLLISTLNMPRVGYFHTDCLIPMAGNNPYASSTEDAAQLSTSAEVYSHRDLKLAVLQIRAPIIQTKVKSFRKLMISWMKSSGFLRTVLLSSAHAYQRDDQQLHGTPLRYMLSPSLEKEERQRFEELGWREMEKISVFPGISDSEQRLYIPGGGVTKCLYTDCCTEDVPMAVVLIFCSEGDNIPDAFALINCLNDWLHLLEKPTQGSVQWRVPPSWKLLFGSGIPPLLF</sequence>
<keyword id="KW-0143">Chaperone</keyword>
<keyword id="KW-0539">Nucleus</keyword>
<keyword id="KW-1185">Reference proteome</keyword>
<accession>Q1LXS2</accession>
<accession>Q6PBR9</accession>
<evidence type="ECO:0000250" key="1"/>
<evidence type="ECO:0000250" key="2">
    <source>
        <dbReference type="UniProtKB" id="Q969U7"/>
    </source>
</evidence>
<evidence type="ECO:0000250" key="3">
    <source>
        <dbReference type="UniProtKB" id="Q9EST4"/>
    </source>
</evidence>
<evidence type="ECO:0000255" key="4"/>
<evidence type="ECO:0000305" key="5"/>
<evidence type="ECO:0000312" key="6">
    <source>
        <dbReference type="EMBL" id="AAH59607.1"/>
    </source>
</evidence>
<evidence type="ECO:0000312" key="7">
    <source>
        <dbReference type="EMBL" id="CAK10887.1"/>
    </source>
</evidence>
<evidence type="ECO:0000312" key="8">
    <source>
        <dbReference type="ZFIN" id="ZDB-GENE-040426-1972"/>
    </source>
</evidence>
<feature type="chain" id="PRO_0000322554" description="Proteasome assembly chaperone 2">
    <location>
        <begin position="1"/>
        <end position="260"/>
    </location>
</feature>
<feature type="sequence conflict" description="In Ref. 2; AAH59607." evidence="5" ref="2">
    <original>M</original>
    <variation>I</variation>
    <location>
        <position position="110"/>
    </location>
</feature>
<organism>
    <name type="scientific">Danio rerio</name>
    <name type="common">Zebrafish</name>
    <name type="synonym">Brachydanio rerio</name>
    <dbReference type="NCBI Taxonomy" id="7955"/>
    <lineage>
        <taxon>Eukaryota</taxon>
        <taxon>Metazoa</taxon>
        <taxon>Chordata</taxon>
        <taxon>Craniata</taxon>
        <taxon>Vertebrata</taxon>
        <taxon>Euteleostomi</taxon>
        <taxon>Actinopterygii</taxon>
        <taxon>Neopterygii</taxon>
        <taxon>Teleostei</taxon>
        <taxon>Ostariophysi</taxon>
        <taxon>Cypriniformes</taxon>
        <taxon>Danionidae</taxon>
        <taxon>Danioninae</taxon>
        <taxon>Danio</taxon>
    </lineage>
</organism>
<proteinExistence type="evidence at transcript level"/>
<gene>
    <name evidence="8" type="primary">psmg2</name>
    <name evidence="8" type="synonym">tnfsf5ip1</name>
    <name type="ORF">si:dkey-263o22.1</name>
    <name type="ORF">wu:fb51b11</name>
    <name type="ORF">zgc:73278</name>
</gene>
<dbReference type="EMBL" id="BX294130">
    <property type="protein sequence ID" value="CAK10887.1"/>
    <property type="molecule type" value="Genomic_DNA"/>
</dbReference>
<dbReference type="EMBL" id="BC059607">
    <property type="protein sequence ID" value="AAH59607.1"/>
    <property type="molecule type" value="mRNA"/>
</dbReference>
<dbReference type="RefSeq" id="NP_998197.1">
    <property type="nucleotide sequence ID" value="NM_213032.1"/>
</dbReference>
<dbReference type="SMR" id="Q1LXS2"/>
<dbReference type="FunCoup" id="Q1LXS2">
    <property type="interactions" value="1829"/>
</dbReference>
<dbReference type="STRING" id="7955.ENSDARP00000052239"/>
<dbReference type="PaxDb" id="7955-ENSDARP00000052239"/>
<dbReference type="Ensembl" id="ENSDART00000052240">
    <property type="protein sequence ID" value="ENSDARP00000052239"/>
    <property type="gene ID" value="ENSDARG00000035987"/>
</dbReference>
<dbReference type="GeneID" id="573107"/>
<dbReference type="KEGG" id="dre:573107"/>
<dbReference type="AGR" id="ZFIN:ZDB-GENE-040426-1972"/>
<dbReference type="CTD" id="56984"/>
<dbReference type="ZFIN" id="ZDB-GENE-040426-1972">
    <property type="gene designation" value="psmg2"/>
</dbReference>
<dbReference type="eggNOG" id="KOG3112">
    <property type="taxonomic scope" value="Eukaryota"/>
</dbReference>
<dbReference type="HOGENOM" id="CLU_062640_0_1_1"/>
<dbReference type="InParanoid" id="Q1LXS2"/>
<dbReference type="OMA" id="WKEHTGE"/>
<dbReference type="OrthoDB" id="10260712at2759"/>
<dbReference type="PhylomeDB" id="Q1LXS2"/>
<dbReference type="TreeFam" id="TF105397"/>
<dbReference type="Reactome" id="R-DRE-9907900">
    <property type="pathway name" value="Proteasome assembly"/>
</dbReference>
<dbReference type="PRO" id="PR:Q1LXS2"/>
<dbReference type="Proteomes" id="UP000000437">
    <property type="component" value="Chromosome 19"/>
</dbReference>
<dbReference type="Bgee" id="ENSDARG00000035987">
    <property type="expression patterns" value="Expressed in granulocyte and 28 other cell types or tissues"/>
</dbReference>
<dbReference type="GO" id="GO:0005829">
    <property type="term" value="C:cytosol"/>
    <property type="evidence" value="ECO:0000318"/>
    <property type="project" value="GO_Central"/>
</dbReference>
<dbReference type="GO" id="GO:0005634">
    <property type="term" value="C:nucleus"/>
    <property type="evidence" value="ECO:0000250"/>
    <property type="project" value="UniProtKB"/>
</dbReference>
<dbReference type="GO" id="GO:0051131">
    <property type="term" value="P:chaperone-mediated protein complex assembly"/>
    <property type="evidence" value="ECO:0000250"/>
    <property type="project" value="UniProtKB"/>
</dbReference>
<dbReference type="GO" id="GO:0043248">
    <property type="term" value="P:proteasome assembly"/>
    <property type="evidence" value="ECO:0000318"/>
    <property type="project" value="GO_Central"/>
</dbReference>
<dbReference type="FunFam" id="3.40.50.10900:FF:000001">
    <property type="entry name" value="Proteasome assembly chaperone 2"/>
    <property type="match status" value="1"/>
</dbReference>
<dbReference type="Gene3D" id="3.40.50.10900">
    <property type="entry name" value="PAC-like subunit"/>
    <property type="match status" value="1"/>
</dbReference>
<dbReference type="InterPro" id="IPR019151">
    <property type="entry name" value="Proteasome_assmbl_chaperone_2"/>
</dbReference>
<dbReference type="InterPro" id="IPR016562">
    <property type="entry name" value="Proteasome_assmbl_chp_2_euk"/>
</dbReference>
<dbReference type="InterPro" id="IPR038389">
    <property type="entry name" value="PSMG2_sf"/>
</dbReference>
<dbReference type="PANTHER" id="PTHR12970">
    <property type="entry name" value="PROTEASOME ASSEMBLY CHAPERONE 2"/>
    <property type="match status" value="1"/>
</dbReference>
<dbReference type="PANTHER" id="PTHR12970:SF1">
    <property type="entry name" value="PROTEASOME ASSEMBLY CHAPERONE 2"/>
    <property type="match status" value="1"/>
</dbReference>
<dbReference type="Pfam" id="PF09754">
    <property type="entry name" value="PAC2"/>
    <property type="match status" value="1"/>
</dbReference>
<dbReference type="PIRSF" id="PIRSF010044">
    <property type="entry name" value="UCP010044"/>
    <property type="match status" value="1"/>
</dbReference>
<dbReference type="SUPFAM" id="SSF159659">
    <property type="entry name" value="Cgl1923-like"/>
    <property type="match status" value="1"/>
</dbReference>
<name>PSMG2_DANRE</name>